<sequence length="225" mass="24635">MQIRWFGHAAFILESGSLKILIDPWISNPLSPVSLQDVKNLKPTHILVTHDHFDHLGDAIDISKATGAPIVGTYELTLEVAEKGIPEAQTLPMNIGGTIKLGDGVEIYMTQALHTANRGAPSGFVIATPEGTVYHAGDTGLFKDMELIAELYDIDVALLPIGSVFTMGPREAAIAVQLLRPKKVVPMHYNTFPLIKQDPEDFKSRVEAISRVKVYLMKPGDTLRI</sequence>
<feature type="chain" id="PRO_0000367239" description="UPF0173 metal-dependent hydrolase Pisl_0803">
    <location>
        <begin position="1"/>
        <end position="225"/>
    </location>
</feature>
<protein>
    <recommendedName>
        <fullName evidence="1">UPF0173 metal-dependent hydrolase Pisl_0803</fullName>
    </recommendedName>
</protein>
<evidence type="ECO:0000255" key="1">
    <source>
        <dbReference type="HAMAP-Rule" id="MF_00457"/>
    </source>
</evidence>
<evidence type="ECO:0000305" key="2"/>
<gene>
    <name type="ordered locus">Pisl_0803</name>
</gene>
<reference key="1">
    <citation type="submission" date="2006-12" db="EMBL/GenBank/DDBJ databases">
        <title>Complete sequence of Pyrobaculum islandicum DSM 4184.</title>
        <authorList>
            <person name="Copeland A."/>
            <person name="Lucas S."/>
            <person name="Lapidus A."/>
            <person name="Barry K."/>
            <person name="Detter J.C."/>
            <person name="Glavina del Rio T."/>
            <person name="Dalin E."/>
            <person name="Tice H."/>
            <person name="Pitluck S."/>
            <person name="Meincke L."/>
            <person name="Brettin T."/>
            <person name="Bruce D."/>
            <person name="Han C."/>
            <person name="Tapia R."/>
            <person name="Gilna P."/>
            <person name="Schmutz J."/>
            <person name="Larimer F."/>
            <person name="Land M."/>
            <person name="Hauser L."/>
            <person name="Kyrpides N."/>
            <person name="Mikhailova N."/>
            <person name="Cozen A.E."/>
            <person name="Fitz-Gibbon S.T."/>
            <person name="House C.H."/>
            <person name="Saltikov C."/>
            <person name="Lowe T."/>
            <person name="Richardson P."/>
        </authorList>
    </citation>
    <scope>NUCLEOTIDE SEQUENCE [LARGE SCALE GENOMIC DNA]</scope>
    <source>
        <strain>DSM 4184 / JCM 9189 / GEO3</strain>
    </source>
</reference>
<comment type="similarity">
    <text evidence="1">Belongs to the UPF0173 family.</text>
</comment>
<comment type="sequence caution" evidence="2">
    <conflict type="erroneous initiation">
        <sequence resource="EMBL-CDS" id="ABL87979"/>
    </conflict>
</comment>
<name>Y803_PYRIL</name>
<accession>A1RSP7</accession>
<proteinExistence type="inferred from homology"/>
<organism>
    <name type="scientific">Pyrobaculum islandicum (strain DSM 4184 / JCM 9189 / GEO3)</name>
    <dbReference type="NCBI Taxonomy" id="384616"/>
    <lineage>
        <taxon>Archaea</taxon>
        <taxon>Thermoproteota</taxon>
        <taxon>Thermoprotei</taxon>
        <taxon>Thermoproteales</taxon>
        <taxon>Thermoproteaceae</taxon>
        <taxon>Pyrobaculum</taxon>
    </lineage>
</organism>
<dbReference type="EMBL" id="CP000504">
    <property type="protein sequence ID" value="ABL87979.1"/>
    <property type="status" value="ALT_INIT"/>
    <property type="molecule type" value="Genomic_DNA"/>
</dbReference>
<dbReference type="RefSeq" id="WP_053240313.1">
    <property type="nucleotide sequence ID" value="NC_008701.1"/>
</dbReference>
<dbReference type="SMR" id="A1RSP7"/>
<dbReference type="STRING" id="384616.Pisl_0803"/>
<dbReference type="GeneID" id="4617985"/>
<dbReference type="KEGG" id="pis:Pisl_0803"/>
<dbReference type="eggNOG" id="arCOG00497">
    <property type="taxonomic scope" value="Archaea"/>
</dbReference>
<dbReference type="HOGENOM" id="CLU_070010_4_0_2"/>
<dbReference type="OrthoDB" id="28313at2157"/>
<dbReference type="Proteomes" id="UP000002595">
    <property type="component" value="Chromosome"/>
</dbReference>
<dbReference type="GO" id="GO:0016787">
    <property type="term" value="F:hydrolase activity"/>
    <property type="evidence" value="ECO:0007669"/>
    <property type="project" value="UniProtKB-UniRule"/>
</dbReference>
<dbReference type="Gene3D" id="3.60.15.10">
    <property type="entry name" value="Ribonuclease Z/Hydroxyacylglutathione hydrolase-like"/>
    <property type="match status" value="1"/>
</dbReference>
<dbReference type="HAMAP" id="MF_00457">
    <property type="entry name" value="UPF0173"/>
    <property type="match status" value="1"/>
</dbReference>
<dbReference type="InterPro" id="IPR001279">
    <property type="entry name" value="Metallo-B-lactamas"/>
</dbReference>
<dbReference type="InterPro" id="IPR036866">
    <property type="entry name" value="RibonucZ/Hydroxyglut_hydro"/>
</dbReference>
<dbReference type="InterPro" id="IPR022877">
    <property type="entry name" value="UPF0173"/>
</dbReference>
<dbReference type="InterPro" id="IPR050114">
    <property type="entry name" value="UPF0173_UPF0282_UlaG_hydrolase"/>
</dbReference>
<dbReference type="NCBIfam" id="NF001911">
    <property type="entry name" value="PRK00685.1"/>
    <property type="match status" value="1"/>
</dbReference>
<dbReference type="PANTHER" id="PTHR43546:SF3">
    <property type="entry name" value="UPF0173 METAL-DEPENDENT HYDROLASE MJ1163"/>
    <property type="match status" value="1"/>
</dbReference>
<dbReference type="PANTHER" id="PTHR43546">
    <property type="entry name" value="UPF0173 METAL-DEPENDENT HYDROLASE MJ1163-RELATED"/>
    <property type="match status" value="1"/>
</dbReference>
<dbReference type="Pfam" id="PF12706">
    <property type="entry name" value="Lactamase_B_2"/>
    <property type="match status" value="1"/>
</dbReference>
<dbReference type="SMART" id="SM00849">
    <property type="entry name" value="Lactamase_B"/>
    <property type="match status" value="1"/>
</dbReference>
<dbReference type="SUPFAM" id="SSF56281">
    <property type="entry name" value="Metallo-hydrolase/oxidoreductase"/>
    <property type="match status" value="1"/>
</dbReference>
<keyword id="KW-0378">Hydrolase</keyword>